<reference key="1">
    <citation type="journal article" date="1985" name="Cell">
        <title>The engrailed locus of Drosophila: structural analysis of an embryonic transcript.</title>
        <authorList>
            <person name="Poole S.J."/>
            <person name="Kauvar L.M."/>
            <person name="Drees B."/>
            <person name="Kornberg T."/>
        </authorList>
    </citation>
    <scope>NUCLEOTIDE SEQUENCE [GENOMIC DNA / MRNA]</scope>
    <source>
        <tissue>Embryo</tissue>
    </source>
</reference>
<reference key="2">
    <citation type="journal article" date="2000" name="Science">
        <title>The genome sequence of Drosophila melanogaster.</title>
        <authorList>
            <person name="Adams M.D."/>
            <person name="Celniker S.E."/>
            <person name="Holt R.A."/>
            <person name="Evans C.A."/>
            <person name="Gocayne J.D."/>
            <person name="Amanatides P.G."/>
            <person name="Scherer S.E."/>
            <person name="Li P.W."/>
            <person name="Hoskins R.A."/>
            <person name="Galle R.F."/>
            <person name="George R.A."/>
            <person name="Lewis S.E."/>
            <person name="Richards S."/>
            <person name="Ashburner M."/>
            <person name="Henderson S.N."/>
            <person name="Sutton G.G."/>
            <person name="Wortman J.R."/>
            <person name="Yandell M.D."/>
            <person name="Zhang Q."/>
            <person name="Chen L.X."/>
            <person name="Brandon R.C."/>
            <person name="Rogers Y.-H.C."/>
            <person name="Blazej R.G."/>
            <person name="Champe M."/>
            <person name="Pfeiffer B.D."/>
            <person name="Wan K.H."/>
            <person name="Doyle C."/>
            <person name="Baxter E.G."/>
            <person name="Helt G."/>
            <person name="Nelson C.R."/>
            <person name="Miklos G.L.G."/>
            <person name="Abril J.F."/>
            <person name="Agbayani A."/>
            <person name="An H.-J."/>
            <person name="Andrews-Pfannkoch C."/>
            <person name="Baldwin D."/>
            <person name="Ballew R.M."/>
            <person name="Basu A."/>
            <person name="Baxendale J."/>
            <person name="Bayraktaroglu L."/>
            <person name="Beasley E.M."/>
            <person name="Beeson K.Y."/>
            <person name="Benos P.V."/>
            <person name="Berman B.P."/>
            <person name="Bhandari D."/>
            <person name="Bolshakov S."/>
            <person name="Borkova D."/>
            <person name="Botchan M.R."/>
            <person name="Bouck J."/>
            <person name="Brokstein P."/>
            <person name="Brottier P."/>
            <person name="Burtis K.C."/>
            <person name="Busam D.A."/>
            <person name="Butler H."/>
            <person name="Cadieu E."/>
            <person name="Center A."/>
            <person name="Chandra I."/>
            <person name="Cherry J.M."/>
            <person name="Cawley S."/>
            <person name="Dahlke C."/>
            <person name="Davenport L.B."/>
            <person name="Davies P."/>
            <person name="de Pablos B."/>
            <person name="Delcher A."/>
            <person name="Deng Z."/>
            <person name="Mays A.D."/>
            <person name="Dew I."/>
            <person name="Dietz S.M."/>
            <person name="Dodson K."/>
            <person name="Doup L.E."/>
            <person name="Downes M."/>
            <person name="Dugan-Rocha S."/>
            <person name="Dunkov B.C."/>
            <person name="Dunn P."/>
            <person name="Durbin K.J."/>
            <person name="Evangelista C.C."/>
            <person name="Ferraz C."/>
            <person name="Ferriera S."/>
            <person name="Fleischmann W."/>
            <person name="Fosler C."/>
            <person name="Gabrielian A.E."/>
            <person name="Garg N.S."/>
            <person name="Gelbart W.M."/>
            <person name="Glasser K."/>
            <person name="Glodek A."/>
            <person name="Gong F."/>
            <person name="Gorrell J.H."/>
            <person name="Gu Z."/>
            <person name="Guan P."/>
            <person name="Harris M."/>
            <person name="Harris N.L."/>
            <person name="Harvey D.A."/>
            <person name="Heiman T.J."/>
            <person name="Hernandez J.R."/>
            <person name="Houck J."/>
            <person name="Hostin D."/>
            <person name="Houston K.A."/>
            <person name="Howland T.J."/>
            <person name="Wei M.-H."/>
            <person name="Ibegwam C."/>
            <person name="Jalali M."/>
            <person name="Kalush F."/>
            <person name="Karpen G.H."/>
            <person name="Ke Z."/>
            <person name="Kennison J.A."/>
            <person name="Ketchum K.A."/>
            <person name="Kimmel B.E."/>
            <person name="Kodira C.D."/>
            <person name="Kraft C.L."/>
            <person name="Kravitz S."/>
            <person name="Kulp D."/>
            <person name="Lai Z."/>
            <person name="Lasko P."/>
            <person name="Lei Y."/>
            <person name="Levitsky A.A."/>
            <person name="Li J.H."/>
            <person name="Li Z."/>
            <person name="Liang Y."/>
            <person name="Lin X."/>
            <person name="Liu X."/>
            <person name="Mattei B."/>
            <person name="McIntosh T.C."/>
            <person name="McLeod M.P."/>
            <person name="McPherson D."/>
            <person name="Merkulov G."/>
            <person name="Milshina N.V."/>
            <person name="Mobarry C."/>
            <person name="Morris J."/>
            <person name="Moshrefi A."/>
            <person name="Mount S.M."/>
            <person name="Moy M."/>
            <person name="Murphy B."/>
            <person name="Murphy L."/>
            <person name="Muzny D.M."/>
            <person name="Nelson D.L."/>
            <person name="Nelson D.R."/>
            <person name="Nelson K.A."/>
            <person name="Nixon K."/>
            <person name="Nusskern D.R."/>
            <person name="Pacleb J.M."/>
            <person name="Palazzolo M."/>
            <person name="Pittman G.S."/>
            <person name="Pan S."/>
            <person name="Pollard J."/>
            <person name="Puri V."/>
            <person name="Reese M.G."/>
            <person name="Reinert K."/>
            <person name="Remington K."/>
            <person name="Saunders R.D.C."/>
            <person name="Scheeler F."/>
            <person name="Shen H."/>
            <person name="Shue B.C."/>
            <person name="Siden-Kiamos I."/>
            <person name="Simpson M."/>
            <person name="Skupski M.P."/>
            <person name="Smith T.J."/>
            <person name="Spier E."/>
            <person name="Spradling A.C."/>
            <person name="Stapleton M."/>
            <person name="Strong R."/>
            <person name="Sun E."/>
            <person name="Svirskas R."/>
            <person name="Tector C."/>
            <person name="Turner R."/>
            <person name="Venter E."/>
            <person name="Wang A.H."/>
            <person name="Wang X."/>
            <person name="Wang Z.-Y."/>
            <person name="Wassarman D.A."/>
            <person name="Weinstock G.M."/>
            <person name="Weissenbach J."/>
            <person name="Williams S.M."/>
            <person name="Woodage T."/>
            <person name="Worley K.C."/>
            <person name="Wu D."/>
            <person name="Yang S."/>
            <person name="Yao Q.A."/>
            <person name="Ye J."/>
            <person name="Yeh R.-F."/>
            <person name="Zaveri J.S."/>
            <person name="Zhan M."/>
            <person name="Zhang G."/>
            <person name="Zhao Q."/>
            <person name="Zheng L."/>
            <person name="Zheng X.H."/>
            <person name="Zhong F.N."/>
            <person name="Zhong W."/>
            <person name="Zhou X."/>
            <person name="Zhu S.C."/>
            <person name="Zhu X."/>
            <person name="Smith H.O."/>
            <person name="Gibbs R.A."/>
            <person name="Myers E.W."/>
            <person name="Rubin G.M."/>
            <person name="Venter J.C."/>
        </authorList>
    </citation>
    <scope>NUCLEOTIDE SEQUENCE [LARGE SCALE GENOMIC DNA]</scope>
    <source>
        <strain>Berkeley</strain>
    </source>
</reference>
<reference key="3">
    <citation type="journal article" date="2002" name="Genome Biol.">
        <title>Annotation of the Drosophila melanogaster euchromatic genome: a systematic review.</title>
        <authorList>
            <person name="Misra S."/>
            <person name="Crosby M.A."/>
            <person name="Mungall C.J."/>
            <person name="Matthews B.B."/>
            <person name="Campbell K.S."/>
            <person name="Hradecky P."/>
            <person name="Huang Y."/>
            <person name="Kaminker J.S."/>
            <person name="Millburn G.H."/>
            <person name="Prochnik S.E."/>
            <person name="Smith C.D."/>
            <person name="Tupy J.L."/>
            <person name="Whitfield E.J."/>
            <person name="Bayraktaroglu L."/>
            <person name="Berman B.P."/>
            <person name="Bettencourt B.R."/>
            <person name="Celniker S.E."/>
            <person name="de Grey A.D.N.J."/>
            <person name="Drysdale R.A."/>
            <person name="Harris N.L."/>
            <person name="Richter J."/>
            <person name="Russo S."/>
            <person name="Schroeder A.J."/>
            <person name="Shu S.Q."/>
            <person name="Stapleton M."/>
            <person name="Yamada C."/>
            <person name="Ashburner M."/>
            <person name="Gelbart W.M."/>
            <person name="Rubin G.M."/>
            <person name="Lewis S.E."/>
        </authorList>
    </citation>
    <scope>GENOME REANNOTATION</scope>
    <source>
        <strain>Berkeley</strain>
    </source>
</reference>
<reference key="4">
    <citation type="journal article" date="2002" name="Genome Biol.">
        <title>A Drosophila full-length cDNA resource.</title>
        <authorList>
            <person name="Stapleton M."/>
            <person name="Carlson J.W."/>
            <person name="Brokstein P."/>
            <person name="Yu C."/>
            <person name="Champe M."/>
            <person name="George R.A."/>
            <person name="Guarin H."/>
            <person name="Kronmiller B."/>
            <person name="Pacleb J.M."/>
            <person name="Park S."/>
            <person name="Wan K.H."/>
            <person name="Rubin G.M."/>
            <person name="Celniker S.E."/>
        </authorList>
    </citation>
    <scope>NUCLEOTIDE SEQUENCE [LARGE SCALE MRNA]</scope>
    <source>
        <strain>Berkeley</strain>
        <tissue>Embryo</tissue>
    </source>
</reference>
<reference key="5">
    <citation type="journal article" date="1985" name="Nature">
        <title>Isolation of a homoeo box-containing gene from the engrailed region of Drosophila and the spatial distribution of its transcripts.</title>
        <authorList>
            <person name="Fjose A."/>
            <person name="McGinnis W."/>
            <person name="Gehring W.J."/>
        </authorList>
    </citation>
    <scope>NUCLEOTIDE SEQUENCE [GENOMIC DNA] OF 443-518</scope>
</reference>
<reference key="6">
    <citation type="journal article" date="1993" name="EMBO J.">
        <title>Functional domains of the Drosophila Engrailed protein.</title>
        <authorList>
            <person name="Han K."/>
            <person name="Manley J.L."/>
        </authorList>
    </citation>
    <scope>CHARACTERIZATION</scope>
</reference>
<reference key="7">
    <citation type="journal article" date="1988" name="Nucleic Acids Res.">
        <title>The Drosophila engrailed protein is phosphorylated by a serine-specific protein kinase.</title>
        <authorList>
            <person name="Gay N.J."/>
            <person name="Poole S.J."/>
            <person name="Kornberg T.B."/>
        </authorList>
    </citation>
    <scope>PHOSPHORYLATION</scope>
</reference>
<reference key="8">
    <citation type="journal article" date="1985" name="Cell">
        <title>Development of embryonic pattern in D. melanogaster as revealed by accumulation of the nuclear engrailed protein.</title>
        <authorList>
            <person name="Dinardo S."/>
            <person name="Kuner J.M."/>
            <person name="Theis J."/>
            <person name="O'Farrell P.H."/>
        </authorList>
    </citation>
    <scope>SUBCELLULAR LOCATION</scope>
</reference>
<reference key="9">
    <citation type="journal article" date="1992" name="Cell">
        <title>wingless signaling acts through zeste-white 3, the Drosophila homolog of glycogen synthase kinase-3, to regulate engrailed and establish cell fate.</title>
        <authorList>
            <person name="Siegfried E."/>
            <person name="Chou T.B."/>
            <person name="Perrimon N."/>
        </authorList>
    </citation>
    <scope>INTERACTION WITH WG AND EN</scope>
    <source>
        <tissue>Embryo</tissue>
    </source>
</reference>
<reference key="10">
    <citation type="journal article" date="1990" name="Cell">
        <title>Crystal structure of an engrailed homeodomain-DNA complex at 2.8-A resolution: a framework for understanding homeodomain-DNA interactions.</title>
        <authorList>
            <person name="Kissinger C.R."/>
            <person name="Liu B."/>
            <person name="Martin-Blanco E."/>
            <person name="Kornberg T.B."/>
            <person name="Pabo C.O."/>
        </authorList>
    </citation>
    <scope>X-RAY CRYSTALLOGRAPHY (2.8 ANGSTROMS) OF 453-512</scope>
</reference>
<reference key="11">
    <citation type="journal article" date="1997" name="Structure">
        <title>Engrailed (Gln50--&gt;Lys) homeodomain-DNA complex at 1.9-A resolution: structural basis for enhanced affinity and altered specificity.</title>
        <authorList>
            <person name="Tucker-Kellogg L."/>
            <person name="Rould M.A."/>
            <person name="Chambers K.A."/>
            <person name="Ades S.E."/>
            <person name="Sauer R.T."/>
            <person name="Pabo C.O."/>
        </authorList>
    </citation>
    <scope>X-RAY CRYSTALLOGRAPHY (1.9 ANGSTROMS) OF 458-512 OF MUTANT LYS-508</scope>
</reference>
<reference key="12">
    <citation type="journal article" date="1998" name="J. Mol. Biol.">
        <title>Engrailed homeodomain-DNA complex at 2.2-A resolution: a detailed view of the interface and comparison with other engrailed structures.</title>
        <authorList>
            <person name="Fraenkel E."/>
            <person name="Rould M.A."/>
            <person name="Chambers K.A."/>
            <person name="Pabo C.O."/>
        </authorList>
    </citation>
    <scope>X-RAY CRYSTALLOGRAPHY (2.2 ANGSTROMS) OF 455-512</scope>
</reference>
<reference key="13">
    <citation type="journal article" date="2000" name="Biochemistry">
        <title>Exploring the role of glutamine 50 in the homeodomain-DNA interface: crystal structure of engrailed (Gln50 --&gt; Ala) complex at 2.0 A.</title>
        <authorList>
            <person name="Grant R.A."/>
            <person name="Rould M.A."/>
            <person name="Klemm J.D."/>
            <person name="Pabo C.O."/>
        </authorList>
    </citation>
    <scope>X-RAY CRYSTALLOGRAPHY (2.0 ANGSTROMS) OF 456-512</scope>
</reference>
<feature type="chain" id="PRO_0000196077" description="Segmentation polarity homeobox protein engrailed">
    <location>
        <begin position="1"/>
        <end position="552"/>
    </location>
</feature>
<feature type="DNA-binding region" description="Homeobox" evidence="1">
    <location>
        <begin position="454"/>
        <end position="513"/>
    </location>
</feature>
<feature type="region of interest" description="Disordered" evidence="2">
    <location>
        <begin position="93"/>
        <end position="112"/>
    </location>
</feature>
<feature type="region of interest" description="Disordered" evidence="2">
    <location>
        <begin position="130"/>
        <end position="171"/>
    </location>
</feature>
<feature type="region of interest" description="Disordered" evidence="2">
    <location>
        <begin position="309"/>
        <end position="419"/>
    </location>
</feature>
<feature type="region of interest" description="Disordered" evidence="2">
    <location>
        <begin position="433"/>
        <end position="460"/>
    </location>
</feature>
<feature type="compositionally biased region" description="Low complexity" evidence="2">
    <location>
        <begin position="93"/>
        <end position="108"/>
    </location>
</feature>
<feature type="compositionally biased region" description="Acidic residues" evidence="2">
    <location>
        <begin position="135"/>
        <end position="151"/>
    </location>
</feature>
<feature type="compositionally biased region" description="Low complexity" evidence="2">
    <location>
        <begin position="317"/>
        <end position="382"/>
    </location>
</feature>
<feature type="compositionally biased region" description="Basic and acidic residues" evidence="2">
    <location>
        <begin position="446"/>
        <end position="457"/>
    </location>
</feature>
<feature type="mutagenesis site" description="Reduced specificity and affinity for DNA.">
    <original>K</original>
    <variation>Q</variation>
    <location>
        <position position="508"/>
    </location>
</feature>
<feature type="sequence conflict" description="In Ref. 1; AAA65478." evidence="5" ref="1">
    <original>M</original>
    <variation>I</variation>
    <location>
        <position position="195"/>
    </location>
</feature>
<feature type="sequence conflict" description="In Ref. 1; AAA65478." evidence="5" ref="1">
    <original>S</original>
    <variation>N</variation>
    <location>
        <position position="208"/>
    </location>
</feature>
<feature type="sequence conflict" description="In Ref. 5; CAA25906." evidence="5" ref="5">
    <original>Q</original>
    <variation>E</variation>
    <location>
        <position position="486"/>
    </location>
</feature>
<feature type="turn" evidence="7">
    <location>
        <begin position="453"/>
        <end position="455"/>
    </location>
</feature>
<feature type="strand" evidence="6">
    <location>
        <begin position="458"/>
        <end position="460"/>
    </location>
</feature>
<feature type="helix" evidence="8">
    <location>
        <begin position="463"/>
        <end position="475"/>
    </location>
</feature>
<feature type="helix" evidence="8">
    <location>
        <begin position="481"/>
        <end position="491"/>
    </location>
</feature>
<feature type="helix" evidence="8">
    <location>
        <begin position="495"/>
        <end position="506"/>
    </location>
</feature>
<feature type="helix" evidence="8">
    <location>
        <begin position="508"/>
        <end position="512"/>
    </location>
</feature>
<keyword id="KW-0002">3D-structure</keyword>
<keyword id="KW-0217">Developmental protein</keyword>
<keyword id="KW-0238">DNA-binding</keyword>
<keyword id="KW-0371">Homeobox</keyword>
<keyword id="KW-0539">Nucleus</keyword>
<keyword id="KW-0597">Phosphoprotein</keyword>
<keyword id="KW-1185">Reference proteome</keyword>
<keyword id="KW-0678">Repressor</keyword>
<keyword id="KW-0709">Segmentation polarity protein</keyword>
<keyword id="KW-0804">Transcription</keyword>
<keyword id="KW-0805">Transcription regulation</keyword>
<name>HMEN_DROME</name>
<protein>
    <recommendedName>
        <fullName>Segmentation polarity homeobox protein engrailed</fullName>
    </recommendedName>
</protein>
<dbReference type="EMBL" id="M10017">
    <property type="protein sequence ID" value="AAA65478.1"/>
    <property type="molecule type" value="mRNA"/>
</dbReference>
<dbReference type="EMBL" id="K03055">
    <property type="status" value="NOT_ANNOTATED_CDS"/>
    <property type="molecule type" value="Genomic_DNA"/>
</dbReference>
<dbReference type="EMBL" id="K03056">
    <property type="status" value="NOT_ANNOTATED_CDS"/>
    <property type="molecule type" value="Genomic_DNA"/>
</dbReference>
<dbReference type="EMBL" id="AE013599">
    <property type="protein sequence ID" value="AAF58639.1"/>
    <property type="molecule type" value="Genomic_DNA"/>
</dbReference>
<dbReference type="EMBL" id="AY069448">
    <property type="protein sequence ID" value="AAL39593.1"/>
    <property type="molecule type" value="mRNA"/>
</dbReference>
<dbReference type="EMBL" id="X01765">
    <property type="protein sequence ID" value="CAA25906.1"/>
    <property type="molecule type" value="Genomic_DNA"/>
</dbReference>
<dbReference type="PIR" id="A90862">
    <property type="entry name" value="WJFFEN"/>
</dbReference>
<dbReference type="RefSeq" id="NP_523700.2">
    <property type="nucleotide sequence ID" value="NM_078976.4"/>
</dbReference>
<dbReference type="RefSeq" id="NP_725059.1">
    <property type="nucleotide sequence ID" value="NM_165841.2"/>
</dbReference>
<dbReference type="PDB" id="1DU0">
    <property type="method" value="X-ray"/>
    <property type="resolution" value="2.00 A"/>
    <property type="chains" value="A/B=456-512"/>
</dbReference>
<dbReference type="PDB" id="1ENH">
    <property type="method" value="X-ray"/>
    <property type="resolution" value="2.10 A"/>
    <property type="chains" value="A=456-509"/>
</dbReference>
<dbReference type="PDB" id="1HDD">
    <property type="method" value="X-ray"/>
    <property type="resolution" value="2.80 A"/>
    <property type="chains" value="C/D=453-512"/>
</dbReference>
<dbReference type="PDB" id="1P7I">
    <property type="method" value="X-ray"/>
    <property type="resolution" value="2.10 A"/>
    <property type="chains" value="A/B/C/D=454-512"/>
</dbReference>
<dbReference type="PDB" id="1P7J">
    <property type="method" value="X-ray"/>
    <property type="resolution" value="2.10 A"/>
    <property type="chains" value="A/B/C/D=454-512"/>
</dbReference>
<dbReference type="PDB" id="1ZTR">
    <property type="method" value="NMR"/>
    <property type="chains" value="A=453-512"/>
</dbReference>
<dbReference type="PDB" id="2HDD">
    <property type="method" value="X-ray"/>
    <property type="resolution" value="1.90 A"/>
    <property type="chains" value="A/B=454-512"/>
</dbReference>
<dbReference type="PDB" id="2HOS">
    <property type="method" value="X-ray"/>
    <property type="resolution" value="1.90 A"/>
    <property type="chains" value="A/B=453-513"/>
</dbReference>
<dbReference type="PDB" id="2HOT">
    <property type="method" value="X-ray"/>
    <property type="resolution" value="2.19 A"/>
    <property type="chains" value="A/B=453-513"/>
</dbReference>
<dbReference type="PDB" id="2JWT">
    <property type="method" value="NMR"/>
    <property type="chains" value="A=453-512"/>
</dbReference>
<dbReference type="PDB" id="2P81">
    <property type="method" value="NMR"/>
    <property type="chains" value="A=469-512"/>
</dbReference>
<dbReference type="PDB" id="3HDD">
    <property type="method" value="X-ray"/>
    <property type="resolution" value="2.20 A"/>
    <property type="chains" value="A/B=454-513"/>
</dbReference>
<dbReference type="PDB" id="6FVC">
    <property type="method" value="NMR"/>
    <property type="chains" value="A=454-512"/>
</dbReference>
<dbReference type="PDB" id="6M3D">
    <property type="method" value="X-ray"/>
    <property type="resolution" value="1.60 A"/>
    <property type="chains" value="C=453-512"/>
</dbReference>
<dbReference type="PDBsum" id="1DU0"/>
<dbReference type="PDBsum" id="1ENH"/>
<dbReference type="PDBsum" id="1HDD"/>
<dbReference type="PDBsum" id="1P7I"/>
<dbReference type="PDBsum" id="1P7J"/>
<dbReference type="PDBsum" id="1ZTR"/>
<dbReference type="PDBsum" id="2HDD"/>
<dbReference type="PDBsum" id="2HOS"/>
<dbReference type="PDBsum" id="2HOT"/>
<dbReference type="PDBsum" id="2JWT"/>
<dbReference type="PDBsum" id="2P81"/>
<dbReference type="PDBsum" id="3HDD"/>
<dbReference type="PDBsum" id="6FVC"/>
<dbReference type="PDBsum" id="6M3D"/>
<dbReference type="BMRB" id="P02836"/>
<dbReference type="SMR" id="P02836"/>
<dbReference type="BioGRID" id="62028">
    <property type="interactions" value="30"/>
</dbReference>
<dbReference type="ELM" id="P02836"/>
<dbReference type="FunCoup" id="P02836">
    <property type="interactions" value="107"/>
</dbReference>
<dbReference type="IntAct" id="P02836">
    <property type="interactions" value="7"/>
</dbReference>
<dbReference type="STRING" id="7227.FBpp0087197"/>
<dbReference type="GlyGen" id="P02836">
    <property type="glycosylation" value="2 sites"/>
</dbReference>
<dbReference type="iPTMnet" id="P02836"/>
<dbReference type="PaxDb" id="7227-FBpp0087197"/>
<dbReference type="DNASU" id="36240"/>
<dbReference type="EnsemblMetazoa" id="FBtr0088095">
    <property type="protein sequence ID" value="FBpp0087197"/>
    <property type="gene ID" value="FBgn0000577"/>
</dbReference>
<dbReference type="EnsemblMetazoa" id="FBtr0088096">
    <property type="protein sequence ID" value="FBpp0087198"/>
    <property type="gene ID" value="FBgn0000577"/>
</dbReference>
<dbReference type="GeneID" id="36240"/>
<dbReference type="KEGG" id="dme:Dmel_CG9015"/>
<dbReference type="AGR" id="FB:FBgn0000577"/>
<dbReference type="CTD" id="36240"/>
<dbReference type="FlyBase" id="FBgn0000577">
    <property type="gene designation" value="en"/>
</dbReference>
<dbReference type="VEuPathDB" id="VectorBase:FBgn0000577"/>
<dbReference type="eggNOG" id="KOG0493">
    <property type="taxonomic scope" value="Eukaryota"/>
</dbReference>
<dbReference type="GeneTree" id="ENSGT00940000167868"/>
<dbReference type="HOGENOM" id="CLU_485085_0_0_1"/>
<dbReference type="InParanoid" id="P02836"/>
<dbReference type="OMA" id="RIHAIPI"/>
<dbReference type="OrthoDB" id="6159439at2759"/>
<dbReference type="PhylomeDB" id="P02836"/>
<dbReference type="SignaLink" id="P02836"/>
<dbReference type="BioGRID-ORCS" id="36240">
    <property type="hits" value="0 hits in 3 CRISPR screens"/>
</dbReference>
<dbReference type="EvolutionaryTrace" id="P02836"/>
<dbReference type="GenomeRNAi" id="36240"/>
<dbReference type="PRO" id="PR:P02836"/>
<dbReference type="Proteomes" id="UP000000803">
    <property type="component" value="Chromosome 2R"/>
</dbReference>
<dbReference type="Bgee" id="FBgn0000577">
    <property type="expression patterns" value="Expressed in head epidermis primordium (Drosophila) and 55 other cell types or tissues"/>
</dbReference>
<dbReference type="ExpressionAtlas" id="P02836">
    <property type="expression patterns" value="baseline and differential"/>
</dbReference>
<dbReference type="GO" id="GO:0005634">
    <property type="term" value="C:nucleus"/>
    <property type="evidence" value="ECO:0000314"/>
    <property type="project" value="FlyBase"/>
</dbReference>
<dbReference type="GO" id="GO:0000981">
    <property type="term" value="F:DNA-binding transcription factor activity, RNA polymerase II-specific"/>
    <property type="evidence" value="ECO:0000318"/>
    <property type="project" value="GO_Central"/>
</dbReference>
<dbReference type="GO" id="GO:0001227">
    <property type="term" value="F:DNA-binding transcription repressor activity, RNA polymerase II-specific"/>
    <property type="evidence" value="ECO:0000314"/>
    <property type="project" value="FlyBase"/>
</dbReference>
<dbReference type="GO" id="GO:0000978">
    <property type="term" value="F:RNA polymerase II cis-regulatory region sequence-specific DNA binding"/>
    <property type="evidence" value="ECO:0000314"/>
    <property type="project" value="FlyBase"/>
</dbReference>
<dbReference type="GO" id="GO:0000977">
    <property type="term" value="F:RNA polymerase II transcription regulatory region sequence-specific DNA binding"/>
    <property type="evidence" value="ECO:0000314"/>
    <property type="project" value="FlyBase"/>
</dbReference>
<dbReference type="GO" id="GO:0043565">
    <property type="term" value="F:sequence-specific DNA binding"/>
    <property type="evidence" value="ECO:0000314"/>
    <property type="project" value="FlyBase"/>
</dbReference>
<dbReference type="GO" id="GO:0007487">
    <property type="term" value="P:analia development"/>
    <property type="evidence" value="ECO:0000304"/>
    <property type="project" value="FlyBase"/>
</dbReference>
<dbReference type="GO" id="GO:0035288">
    <property type="term" value="P:anterior head segmentation"/>
    <property type="evidence" value="ECO:0000304"/>
    <property type="project" value="FlyBase"/>
</dbReference>
<dbReference type="GO" id="GO:0048099">
    <property type="term" value="P:anterior/posterior lineage restriction, imaginal disc"/>
    <property type="evidence" value="ECO:0000304"/>
    <property type="project" value="FlyBase"/>
</dbReference>
<dbReference type="GO" id="GO:0007411">
    <property type="term" value="P:axon guidance"/>
    <property type="evidence" value="ECO:0000315"/>
    <property type="project" value="FlyBase"/>
</dbReference>
<dbReference type="GO" id="GO:0007386">
    <property type="term" value="P:compartment pattern specification"/>
    <property type="evidence" value="ECO:0000304"/>
    <property type="project" value="FlyBase"/>
</dbReference>
<dbReference type="GO" id="GO:0035224">
    <property type="term" value="P:genital disc anterior/posterior pattern formation"/>
    <property type="evidence" value="ECO:0000270"/>
    <property type="project" value="FlyBase"/>
</dbReference>
<dbReference type="GO" id="GO:0035215">
    <property type="term" value="P:genital disc development"/>
    <property type="evidence" value="ECO:0000315"/>
    <property type="project" value="FlyBase"/>
</dbReference>
<dbReference type="GO" id="GO:0008406">
    <property type="term" value="P:gonad development"/>
    <property type="evidence" value="ECO:0000315"/>
    <property type="project" value="FlyBase"/>
</dbReference>
<dbReference type="GO" id="GO:0007474">
    <property type="term" value="P:imaginal disc-derived wing vein specification"/>
    <property type="evidence" value="ECO:0000315"/>
    <property type="project" value="FlyBase"/>
</dbReference>
<dbReference type="GO" id="GO:0010629">
    <property type="term" value="P:negative regulation of gene expression"/>
    <property type="evidence" value="ECO:0000315"/>
    <property type="project" value="FlyBase"/>
</dbReference>
<dbReference type="GO" id="GO:0043524">
    <property type="term" value="P:negative regulation of neuron apoptotic process"/>
    <property type="evidence" value="ECO:0000314"/>
    <property type="project" value="FlyBase"/>
</dbReference>
<dbReference type="GO" id="GO:0000122">
    <property type="term" value="P:negative regulation of transcription by RNA polymerase II"/>
    <property type="evidence" value="ECO:0000315"/>
    <property type="project" value="FlyBase"/>
</dbReference>
<dbReference type="GO" id="GO:0007400">
    <property type="term" value="P:neuroblast fate determination"/>
    <property type="evidence" value="ECO:0000316"/>
    <property type="project" value="FlyBase"/>
</dbReference>
<dbReference type="GO" id="GO:0045944">
    <property type="term" value="P:positive regulation of transcription by RNA polymerase II"/>
    <property type="evidence" value="ECO:0000315"/>
    <property type="project" value="FlyBase"/>
</dbReference>
<dbReference type="GO" id="GO:0007388">
    <property type="term" value="P:posterior compartment specification"/>
    <property type="evidence" value="ECO:0000304"/>
    <property type="project" value="FlyBase"/>
</dbReference>
<dbReference type="GO" id="GO:0035289">
    <property type="term" value="P:posterior head segmentation"/>
    <property type="evidence" value="ECO:0000304"/>
    <property type="project" value="FlyBase"/>
</dbReference>
<dbReference type="GO" id="GO:0010468">
    <property type="term" value="P:regulation of gene expression"/>
    <property type="evidence" value="ECO:0000315"/>
    <property type="project" value="FlyBase"/>
</dbReference>
<dbReference type="GO" id="GO:0006357">
    <property type="term" value="P:regulation of transcription by RNA polymerase II"/>
    <property type="evidence" value="ECO:0000318"/>
    <property type="project" value="GO_Central"/>
</dbReference>
<dbReference type="GO" id="GO:0007367">
    <property type="term" value="P:segment polarity determination"/>
    <property type="evidence" value="ECO:0000304"/>
    <property type="project" value="FlyBase"/>
</dbReference>
<dbReference type="GO" id="GO:0035277">
    <property type="term" value="P:spiracle morphogenesis, open tracheal system"/>
    <property type="evidence" value="ECO:0000315"/>
    <property type="project" value="FlyBase"/>
</dbReference>
<dbReference type="GO" id="GO:0035290">
    <property type="term" value="P:trunk segmentation"/>
    <property type="evidence" value="ECO:0000304"/>
    <property type="project" value="FlyBase"/>
</dbReference>
<dbReference type="GO" id="GO:0007418">
    <property type="term" value="P:ventral midline development"/>
    <property type="evidence" value="ECO:0000315"/>
    <property type="project" value="FlyBase"/>
</dbReference>
<dbReference type="GO" id="GO:0048100">
    <property type="term" value="P:wing disc anterior/posterior pattern formation"/>
    <property type="evidence" value="ECO:0000304"/>
    <property type="project" value="FlyBase"/>
</dbReference>
<dbReference type="GO" id="GO:0007472">
    <property type="term" value="P:wing disc morphogenesis"/>
    <property type="evidence" value="ECO:0000315"/>
    <property type="project" value="FlyBase"/>
</dbReference>
<dbReference type="CDD" id="cd00086">
    <property type="entry name" value="homeodomain"/>
    <property type="match status" value="1"/>
</dbReference>
<dbReference type="FunFam" id="1.10.10.60:FF:000418">
    <property type="entry name" value="Homeobox protein engrailed-like"/>
    <property type="match status" value="1"/>
</dbReference>
<dbReference type="Gene3D" id="1.10.10.60">
    <property type="entry name" value="Homeodomain-like"/>
    <property type="match status" value="1"/>
</dbReference>
<dbReference type="InterPro" id="IPR050720">
    <property type="entry name" value="Engrailed_Homeobox_TFs"/>
</dbReference>
<dbReference type="InterPro" id="IPR001356">
    <property type="entry name" value="HD"/>
</dbReference>
<dbReference type="InterPro" id="IPR000747">
    <property type="entry name" value="HD_engrailed"/>
</dbReference>
<dbReference type="InterPro" id="IPR020479">
    <property type="entry name" value="HD_metazoa"/>
</dbReference>
<dbReference type="InterPro" id="IPR019549">
    <property type="entry name" value="Homeobox-engrailed_C-terminal"/>
</dbReference>
<dbReference type="InterPro" id="IPR019737">
    <property type="entry name" value="Homeobox-engrailed_CS"/>
</dbReference>
<dbReference type="InterPro" id="IPR017970">
    <property type="entry name" value="Homeobox_CS"/>
</dbReference>
<dbReference type="InterPro" id="IPR009057">
    <property type="entry name" value="Homeodomain-like_sf"/>
</dbReference>
<dbReference type="InterPro" id="IPR000047">
    <property type="entry name" value="HTH_motif"/>
</dbReference>
<dbReference type="PANTHER" id="PTHR24341">
    <property type="entry name" value="HOMEOBOX PROTEIN ENGRAILED"/>
    <property type="match status" value="1"/>
</dbReference>
<dbReference type="PANTHER" id="PTHR24341:SF9">
    <property type="entry name" value="SEGMENTATION POLARITY HOMEOBOX PROTEIN ENGRAILED"/>
    <property type="match status" value="1"/>
</dbReference>
<dbReference type="Pfam" id="PF10525">
    <property type="entry name" value="Engrail_1_C_sig"/>
    <property type="match status" value="1"/>
</dbReference>
<dbReference type="Pfam" id="PF00046">
    <property type="entry name" value="Homeodomain"/>
    <property type="match status" value="1"/>
</dbReference>
<dbReference type="PRINTS" id="PR00026">
    <property type="entry name" value="ENGRAILED"/>
</dbReference>
<dbReference type="PRINTS" id="PR00024">
    <property type="entry name" value="HOMEOBOX"/>
</dbReference>
<dbReference type="PRINTS" id="PR00031">
    <property type="entry name" value="HTHREPRESSR"/>
</dbReference>
<dbReference type="SMART" id="SM00389">
    <property type="entry name" value="HOX"/>
    <property type="match status" value="1"/>
</dbReference>
<dbReference type="SUPFAM" id="SSF46689">
    <property type="entry name" value="Homeodomain-like"/>
    <property type="match status" value="1"/>
</dbReference>
<dbReference type="PROSITE" id="PS00033">
    <property type="entry name" value="ENGRAILED"/>
    <property type="match status" value="1"/>
</dbReference>
<dbReference type="PROSITE" id="PS00027">
    <property type="entry name" value="HOMEOBOX_1"/>
    <property type="match status" value="1"/>
</dbReference>
<dbReference type="PROSITE" id="PS50071">
    <property type="entry name" value="HOMEOBOX_2"/>
    <property type="match status" value="1"/>
</dbReference>
<organism>
    <name type="scientific">Drosophila melanogaster</name>
    <name type="common">Fruit fly</name>
    <dbReference type="NCBI Taxonomy" id="7227"/>
    <lineage>
        <taxon>Eukaryota</taxon>
        <taxon>Metazoa</taxon>
        <taxon>Ecdysozoa</taxon>
        <taxon>Arthropoda</taxon>
        <taxon>Hexapoda</taxon>
        <taxon>Insecta</taxon>
        <taxon>Pterygota</taxon>
        <taxon>Neoptera</taxon>
        <taxon>Endopterygota</taxon>
        <taxon>Diptera</taxon>
        <taxon>Brachycera</taxon>
        <taxon>Muscomorpha</taxon>
        <taxon>Ephydroidea</taxon>
        <taxon>Drosophilidae</taxon>
        <taxon>Drosophila</taxon>
        <taxon>Sophophora</taxon>
    </lineage>
</organism>
<proteinExistence type="evidence at protein level"/>
<accession>P02836</accession>
<accession>P02837</accession>
<accession>Q0E9C0</accession>
<accession>Q24356</accession>
<accession>Q9V601</accession>
<comment type="function">
    <text>This protein specifies the body segmentation pattern. It is required for the development of the central nervous system. Transcriptional regulator that represses activated promoters. Wg signaling operates by inactivating the SGG repression of EN autoactivation.</text>
</comment>
<comment type="subcellular location">
    <subcellularLocation>
        <location evidence="1 4">Nucleus</location>
    </subcellularLocation>
</comment>
<comment type="developmental stage">
    <text>Expression initiates prior to the ninth embryonic nuclear division cycle within 1.5 hours after fertilization. By the cellular blastoderm stage (the 14th nuclear division cycle) is localized into 14 stripes, 1-2 cells wide, spaced along the anterior-posterior axis of the embryo.</text>
</comment>
<comment type="PTM">
    <text evidence="3">Phosphorylated. Phosphorylation may directly or allosterically modify its function.</text>
</comment>
<comment type="similarity">
    <text evidence="5">Belongs to the engrailed homeobox family.</text>
</comment>
<evidence type="ECO:0000255" key="1">
    <source>
        <dbReference type="PROSITE-ProRule" id="PRU00108"/>
    </source>
</evidence>
<evidence type="ECO:0000256" key="2">
    <source>
        <dbReference type="SAM" id="MobiDB-lite"/>
    </source>
</evidence>
<evidence type="ECO:0000269" key="3">
    <source>
    </source>
</evidence>
<evidence type="ECO:0000269" key="4">
    <source>
    </source>
</evidence>
<evidence type="ECO:0000305" key="5"/>
<evidence type="ECO:0007829" key="6">
    <source>
        <dbReference type="PDB" id="1ZTR"/>
    </source>
</evidence>
<evidence type="ECO:0007829" key="7">
    <source>
        <dbReference type="PDB" id="2JWT"/>
    </source>
</evidence>
<evidence type="ECO:0007829" key="8">
    <source>
        <dbReference type="PDB" id="6M3D"/>
    </source>
</evidence>
<sequence length="552" mass="59411">MALEDRCSPQSAPSPITLQMQHLHHQQQQQQQQQQQMQHLHQLQQLQQLHQQQLAAGVFHHPAMAFDAAAAAAAAAAAAAAHAHAAALQQRLSGSGSPASCSTPASSTPLTIKEEESDSVIGDMSFHNQTHTTNEEEEAEEDDDIDVDVDDTSAGGRLPPPAHQQQSTAKPSLAFSISNILSDRFGDVQKPGKSMENQASIFRPFEASRSQTATPSAFTRVDLLEFSRQQQAAAAAATAAMMLERANFLNCFNPAAYPRIHEEIVQSRLRRSAANAVIPPPMSSKMSDANPEKSALGSLCKAVSQIGQPAAPTMTQPPLSSSASSLASPPPASNASTISSTSSVATSSSSSSSGCSSAASSLNSSPSSRLGASGSGVNASSPQPQPIPPPSAVSRDSGMESSDDTRSETGSTTTEGGKNEMWPAWVYCTRYSDRPSSGPRYRRPKQPKDKTNDEKRPRTAFSSEQLARLKREFNENRYLTERRRQQLSSELGLNEAQIKIWFQNKRAKIKKSTGSKNPLALQLMAQGLYNHTTVPLTKEEEELEMRMNGQIP</sequence>
<gene>
    <name type="primary">en</name>
    <name type="ORF">CG9015</name>
</gene>